<sequence>MLILASASQARRNLLEQLSIKYAVMVSHIDEGKYNSQNVKELVQALSFAKTESVVSEYIFNCRKENKALAILGCDSLFEFDGEILGKPRNKSEAICRLEKFSSKSGILHTGHCLMYRQNLNNKVIGKSFDGIICDVVSTRINFSELSNVEITKYVETGEPINCAGGFAIDGKGAVFIKSIEGCYSNVIGLSLPWLRYALNKAGMSLWK</sequence>
<feature type="chain" id="PRO_0000123041" description="Nucleoside triphosphate pyrophosphatase">
    <location>
        <begin position="1"/>
        <end position="208"/>
    </location>
</feature>
<feature type="active site" description="Proton acceptor" evidence="1">
    <location>
        <position position="75"/>
    </location>
</feature>
<dbReference type="EC" id="3.6.1.9" evidence="1"/>
<dbReference type="EMBL" id="AE017126">
    <property type="protein sequence ID" value="AAQ00301.1"/>
    <property type="molecule type" value="Genomic_DNA"/>
</dbReference>
<dbReference type="RefSeq" id="NP_875648.1">
    <property type="nucleotide sequence ID" value="NC_005042.1"/>
</dbReference>
<dbReference type="RefSeq" id="WP_011125408.1">
    <property type="nucleotide sequence ID" value="NC_005042.1"/>
</dbReference>
<dbReference type="SMR" id="Q7VB43"/>
<dbReference type="STRING" id="167539.Pro_1257"/>
<dbReference type="EnsemblBacteria" id="AAQ00301">
    <property type="protein sequence ID" value="AAQ00301"/>
    <property type="gene ID" value="Pro_1257"/>
</dbReference>
<dbReference type="KEGG" id="pma:Pro_1257"/>
<dbReference type="PATRIC" id="fig|167539.5.peg.1319"/>
<dbReference type="eggNOG" id="COG0424">
    <property type="taxonomic scope" value="Bacteria"/>
</dbReference>
<dbReference type="HOGENOM" id="CLU_040416_1_2_3"/>
<dbReference type="OrthoDB" id="9807767at2"/>
<dbReference type="Proteomes" id="UP000001420">
    <property type="component" value="Chromosome"/>
</dbReference>
<dbReference type="GO" id="GO:0005737">
    <property type="term" value="C:cytoplasm"/>
    <property type="evidence" value="ECO:0007669"/>
    <property type="project" value="UniProtKB-SubCell"/>
</dbReference>
<dbReference type="GO" id="GO:0047429">
    <property type="term" value="F:nucleoside triphosphate diphosphatase activity"/>
    <property type="evidence" value="ECO:0007669"/>
    <property type="project" value="UniProtKB-EC"/>
</dbReference>
<dbReference type="GO" id="GO:0009117">
    <property type="term" value="P:nucleotide metabolic process"/>
    <property type="evidence" value="ECO:0007669"/>
    <property type="project" value="UniProtKB-KW"/>
</dbReference>
<dbReference type="CDD" id="cd00555">
    <property type="entry name" value="Maf"/>
    <property type="match status" value="1"/>
</dbReference>
<dbReference type="Gene3D" id="3.90.950.10">
    <property type="match status" value="1"/>
</dbReference>
<dbReference type="HAMAP" id="MF_00528">
    <property type="entry name" value="Maf"/>
    <property type="match status" value="1"/>
</dbReference>
<dbReference type="InterPro" id="IPR029001">
    <property type="entry name" value="ITPase-like_fam"/>
</dbReference>
<dbReference type="InterPro" id="IPR003697">
    <property type="entry name" value="Maf-like"/>
</dbReference>
<dbReference type="NCBIfam" id="TIGR00172">
    <property type="entry name" value="maf"/>
    <property type="match status" value="1"/>
</dbReference>
<dbReference type="PANTHER" id="PTHR43213">
    <property type="entry name" value="BIFUNCTIONAL DTTP/UTP PYROPHOSPHATASE/METHYLTRANSFERASE PROTEIN-RELATED"/>
    <property type="match status" value="1"/>
</dbReference>
<dbReference type="PANTHER" id="PTHR43213:SF5">
    <property type="entry name" value="BIFUNCTIONAL DTTP_UTP PYROPHOSPHATASE_METHYLTRANSFERASE PROTEIN-RELATED"/>
    <property type="match status" value="1"/>
</dbReference>
<dbReference type="Pfam" id="PF02545">
    <property type="entry name" value="Maf"/>
    <property type="match status" value="1"/>
</dbReference>
<dbReference type="PIRSF" id="PIRSF006305">
    <property type="entry name" value="Maf"/>
    <property type="match status" value="1"/>
</dbReference>
<dbReference type="SUPFAM" id="SSF52972">
    <property type="entry name" value="ITPase-like"/>
    <property type="match status" value="1"/>
</dbReference>
<evidence type="ECO:0000255" key="1">
    <source>
        <dbReference type="HAMAP-Rule" id="MF_00528"/>
    </source>
</evidence>
<reference key="1">
    <citation type="journal article" date="2003" name="Proc. Natl. Acad. Sci. U.S.A.">
        <title>Genome sequence of the cyanobacterium Prochlorococcus marinus SS120, a nearly minimal oxyphototrophic genome.</title>
        <authorList>
            <person name="Dufresne A."/>
            <person name="Salanoubat M."/>
            <person name="Partensky F."/>
            <person name="Artiguenave F."/>
            <person name="Axmann I.M."/>
            <person name="Barbe V."/>
            <person name="Duprat S."/>
            <person name="Galperin M.Y."/>
            <person name="Koonin E.V."/>
            <person name="Le Gall F."/>
            <person name="Makarova K.S."/>
            <person name="Ostrowski M."/>
            <person name="Oztas S."/>
            <person name="Robert C."/>
            <person name="Rogozin I.B."/>
            <person name="Scanlan D.J."/>
            <person name="Tandeau de Marsac N."/>
            <person name="Weissenbach J."/>
            <person name="Wincker P."/>
            <person name="Wolf Y.I."/>
            <person name="Hess W.R."/>
        </authorList>
    </citation>
    <scope>NUCLEOTIDE SEQUENCE [LARGE SCALE GENOMIC DNA]</scope>
    <source>
        <strain>SARG / CCMP1375 / SS120</strain>
    </source>
</reference>
<accession>Q7VB43</accession>
<gene>
    <name type="primary">maf</name>
    <name type="ordered locus">Pro_1257</name>
</gene>
<proteinExistence type="inferred from homology"/>
<name>NTPP_PROMA</name>
<comment type="function">
    <text evidence="1">Nucleoside triphosphate pyrophosphatase. May have a dual role in cell division arrest and in preventing the incorporation of modified nucleotides into cellular nucleic acids.</text>
</comment>
<comment type="catalytic activity">
    <reaction evidence="1">
        <text>a ribonucleoside 5'-triphosphate + H2O = a ribonucleoside 5'-phosphate + diphosphate + H(+)</text>
        <dbReference type="Rhea" id="RHEA:23996"/>
        <dbReference type="ChEBI" id="CHEBI:15377"/>
        <dbReference type="ChEBI" id="CHEBI:15378"/>
        <dbReference type="ChEBI" id="CHEBI:33019"/>
        <dbReference type="ChEBI" id="CHEBI:58043"/>
        <dbReference type="ChEBI" id="CHEBI:61557"/>
        <dbReference type="EC" id="3.6.1.9"/>
    </reaction>
</comment>
<comment type="catalytic activity">
    <reaction evidence="1">
        <text>a 2'-deoxyribonucleoside 5'-triphosphate + H2O = a 2'-deoxyribonucleoside 5'-phosphate + diphosphate + H(+)</text>
        <dbReference type="Rhea" id="RHEA:44644"/>
        <dbReference type="ChEBI" id="CHEBI:15377"/>
        <dbReference type="ChEBI" id="CHEBI:15378"/>
        <dbReference type="ChEBI" id="CHEBI:33019"/>
        <dbReference type="ChEBI" id="CHEBI:61560"/>
        <dbReference type="ChEBI" id="CHEBI:65317"/>
        <dbReference type="EC" id="3.6.1.9"/>
    </reaction>
</comment>
<comment type="cofactor">
    <cofactor evidence="1">
        <name>a divalent metal cation</name>
        <dbReference type="ChEBI" id="CHEBI:60240"/>
    </cofactor>
</comment>
<comment type="subcellular location">
    <subcellularLocation>
        <location evidence="1">Cytoplasm</location>
    </subcellularLocation>
</comment>
<comment type="similarity">
    <text evidence="1">Belongs to the Maf family.</text>
</comment>
<keyword id="KW-0963">Cytoplasm</keyword>
<keyword id="KW-0378">Hydrolase</keyword>
<keyword id="KW-0546">Nucleotide metabolism</keyword>
<keyword id="KW-1185">Reference proteome</keyword>
<protein>
    <recommendedName>
        <fullName evidence="1">Nucleoside triphosphate pyrophosphatase</fullName>
        <ecNumber evidence="1">3.6.1.9</ecNumber>
    </recommendedName>
    <alternativeName>
        <fullName evidence="1">Nucleotide pyrophosphatase</fullName>
        <shortName evidence="1">Nucleotide PPase</shortName>
    </alternativeName>
</protein>
<organism>
    <name type="scientific">Prochlorococcus marinus (strain SARG / CCMP1375 / SS120)</name>
    <dbReference type="NCBI Taxonomy" id="167539"/>
    <lineage>
        <taxon>Bacteria</taxon>
        <taxon>Bacillati</taxon>
        <taxon>Cyanobacteriota</taxon>
        <taxon>Cyanophyceae</taxon>
        <taxon>Synechococcales</taxon>
        <taxon>Prochlorococcaceae</taxon>
        <taxon>Prochlorococcus</taxon>
    </lineage>
</organism>